<keyword id="KW-0028">Amino-acid biosynthesis</keyword>
<keyword id="KW-0963">Cytoplasm</keyword>
<keyword id="KW-0220">Diaminopimelate biosynthesis</keyword>
<keyword id="KW-0457">Lysine biosynthesis</keyword>
<keyword id="KW-0520">NAD</keyword>
<keyword id="KW-0521">NADP</keyword>
<keyword id="KW-0560">Oxidoreductase</keyword>
<gene>
    <name evidence="1" type="primary">dapB</name>
    <name type="ordered locus">RBAM_020640</name>
</gene>
<evidence type="ECO:0000255" key="1">
    <source>
        <dbReference type="HAMAP-Rule" id="MF_00102"/>
    </source>
</evidence>
<evidence type="ECO:0000305" key="2"/>
<accession>A7Z600</accession>
<reference key="1">
    <citation type="journal article" date="2007" name="Nat. Biotechnol.">
        <title>Comparative analysis of the complete genome sequence of the plant growth-promoting bacterium Bacillus amyloliquefaciens FZB42.</title>
        <authorList>
            <person name="Chen X.H."/>
            <person name="Koumoutsi A."/>
            <person name="Scholz R."/>
            <person name="Eisenreich A."/>
            <person name="Schneider K."/>
            <person name="Heinemeyer I."/>
            <person name="Morgenstern B."/>
            <person name="Voss B."/>
            <person name="Hess W.R."/>
            <person name="Reva O."/>
            <person name="Junge H."/>
            <person name="Voigt B."/>
            <person name="Jungblut P.R."/>
            <person name="Vater J."/>
            <person name="Suessmuth R."/>
            <person name="Liesegang H."/>
            <person name="Strittmatter A."/>
            <person name="Gottschalk G."/>
            <person name="Borriss R."/>
        </authorList>
    </citation>
    <scope>NUCLEOTIDE SEQUENCE [LARGE SCALE GENOMIC DNA]</scope>
    <source>
        <strain>DSM 23117 / BGSC 10A6 / LMG 26770 / FZB42</strain>
    </source>
</reference>
<feature type="chain" id="PRO_1000008534" description="4-hydroxy-tetrahydrodipicolinate reductase">
    <location>
        <begin position="1"/>
        <end position="267"/>
    </location>
</feature>
<feature type="active site" description="Proton donor/acceptor" evidence="1">
    <location>
        <position position="156"/>
    </location>
</feature>
<feature type="active site" description="Proton donor" evidence="1">
    <location>
        <position position="160"/>
    </location>
</feature>
<feature type="binding site" evidence="1">
    <location>
        <begin position="12"/>
        <end position="17"/>
    </location>
    <ligand>
        <name>NAD(+)</name>
        <dbReference type="ChEBI" id="CHEBI:57540"/>
    </ligand>
</feature>
<feature type="binding site" evidence="1">
    <location>
        <begin position="100"/>
        <end position="102"/>
    </location>
    <ligand>
        <name>NAD(+)</name>
        <dbReference type="ChEBI" id="CHEBI:57540"/>
    </ligand>
</feature>
<feature type="binding site" evidence="1">
    <location>
        <begin position="126"/>
        <end position="129"/>
    </location>
    <ligand>
        <name>NAD(+)</name>
        <dbReference type="ChEBI" id="CHEBI:57540"/>
    </ligand>
</feature>
<feature type="binding site" evidence="1">
    <location>
        <position position="157"/>
    </location>
    <ligand>
        <name>(S)-2,3,4,5-tetrahydrodipicolinate</name>
        <dbReference type="ChEBI" id="CHEBI:16845"/>
    </ligand>
</feature>
<feature type="binding site" evidence="1">
    <location>
        <begin position="166"/>
        <end position="167"/>
    </location>
    <ligand>
        <name>(S)-2,3,4,5-tetrahydrodipicolinate</name>
        <dbReference type="ChEBI" id="CHEBI:16845"/>
    </ligand>
</feature>
<comment type="function">
    <text evidence="1">Catalyzes the conversion of 4-hydroxy-tetrahydrodipicolinate (HTPA) to tetrahydrodipicolinate.</text>
</comment>
<comment type="catalytic activity">
    <reaction evidence="1">
        <text>(S)-2,3,4,5-tetrahydrodipicolinate + NAD(+) + H2O = (2S,4S)-4-hydroxy-2,3,4,5-tetrahydrodipicolinate + NADH + H(+)</text>
        <dbReference type="Rhea" id="RHEA:35323"/>
        <dbReference type="ChEBI" id="CHEBI:15377"/>
        <dbReference type="ChEBI" id="CHEBI:15378"/>
        <dbReference type="ChEBI" id="CHEBI:16845"/>
        <dbReference type="ChEBI" id="CHEBI:57540"/>
        <dbReference type="ChEBI" id="CHEBI:57945"/>
        <dbReference type="ChEBI" id="CHEBI:67139"/>
        <dbReference type="EC" id="1.17.1.8"/>
    </reaction>
</comment>
<comment type="catalytic activity">
    <reaction evidence="1">
        <text>(S)-2,3,4,5-tetrahydrodipicolinate + NADP(+) + H2O = (2S,4S)-4-hydroxy-2,3,4,5-tetrahydrodipicolinate + NADPH + H(+)</text>
        <dbReference type="Rhea" id="RHEA:35331"/>
        <dbReference type="ChEBI" id="CHEBI:15377"/>
        <dbReference type="ChEBI" id="CHEBI:15378"/>
        <dbReference type="ChEBI" id="CHEBI:16845"/>
        <dbReference type="ChEBI" id="CHEBI:57783"/>
        <dbReference type="ChEBI" id="CHEBI:58349"/>
        <dbReference type="ChEBI" id="CHEBI:67139"/>
        <dbReference type="EC" id="1.17.1.8"/>
    </reaction>
</comment>
<comment type="pathway">
    <text evidence="1">Amino-acid biosynthesis; L-lysine biosynthesis via DAP pathway; (S)-tetrahydrodipicolinate from L-aspartate: step 4/4.</text>
</comment>
<comment type="subcellular location">
    <subcellularLocation>
        <location evidence="1">Cytoplasm</location>
    </subcellularLocation>
</comment>
<comment type="similarity">
    <text evidence="1">Belongs to the DapB family.</text>
</comment>
<comment type="caution">
    <text evidence="2">Was originally thought to be a dihydrodipicolinate reductase (DHDPR), catalyzing the conversion of dihydrodipicolinate to tetrahydrodipicolinate. However, it was shown in E.coli that the substrate of the enzymatic reaction is not dihydrodipicolinate (DHDP) but in fact (2S,4S)-4-hydroxy-2,3,4,5-tetrahydrodipicolinic acid (HTPA), the product released by the DapA-catalyzed reaction.</text>
</comment>
<sequence length="267" mass="29375">MSNETIKVVIAGPRGRMGQEAVKLAVRTPHFELVGAIDHTYDQQTLREVMSADSDALIYTDIRACFQETKPDVLIDLTTPEIGKKHTKAALEHGVRPVVGTTGFSEADLEELQALTEEKGIGAIIAPNFALGAVLMMKFSQMAANYFEDVEIIELHHDQKLDAPSGTALKTAEMISSVRTEKQQGHPDEKEILPGARGAELNGIRLHSVRLPGLIAHQEVMFGMDGQTLKLRHDSYNRASFMSGVKLSVEQVMKIDQLVYGLENIID</sequence>
<organism>
    <name type="scientific">Bacillus velezensis (strain DSM 23117 / BGSC 10A6 / LMG 26770 / FZB42)</name>
    <name type="common">Bacillus amyloliquefaciens subsp. plantarum</name>
    <dbReference type="NCBI Taxonomy" id="326423"/>
    <lineage>
        <taxon>Bacteria</taxon>
        <taxon>Bacillati</taxon>
        <taxon>Bacillota</taxon>
        <taxon>Bacilli</taxon>
        <taxon>Bacillales</taxon>
        <taxon>Bacillaceae</taxon>
        <taxon>Bacillus</taxon>
        <taxon>Bacillus amyloliquefaciens group</taxon>
    </lineage>
</organism>
<name>DAPB_BACVZ</name>
<protein>
    <recommendedName>
        <fullName evidence="1">4-hydroxy-tetrahydrodipicolinate reductase</fullName>
        <shortName evidence="1">HTPA reductase</shortName>
        <ecNumber evidence="1">1.17.1.8</ecNumber>
    </recommendedName>
</protein>
<proteinExistence type="inferred from homology"/>
<dbReference type="EC" id="1.17.1.8" evidence="1"/>
<dbReference type="EMBL" id="CP000560">
    <property type="protein sequence ID" value="ABS74426.1"/>
    <property type="molecule type" value="Genomic_DNA"/>
</dbReference>
<dbReference type="RefSeq" id="WP_003153497.1">
    <property type="nucleotide sequence ID" value="NC_009725.2"/>
</dbReference>
<dbReference type="SMR" id="A7Z600"/>
<dbReference type="GeneID" id="93081199"/>
<dbReference type="KEGG" id="bay:RBAM_020640"/>
<dbReference type="HOGENOM" id="CLU_047479_0_1_9"/>
<dbReference type="UniPathway" id="UPA00034">
    <property type="reaction ID" value="UER00018"/>
</dbReference>
<dbReference type="Proteomes" id="UP000001120">
    <property type="component" value="Chromosome"/>
</dbReference>
<dbReference type="GO" id="GO:0005829">
    <property type="term" value="C:cytosol"/>
    <property type="evidence" value="ECO:0007669"/>
    <property type="project" value="TreeGrafter"/>
</dbReference>
<dbReference type="GO" id="GO:0008839">
    <property type="term" value="F:4-hydroxy-tetrahydrodipicolinate reductase"/>
    <property type="evidence" value="ECO:0007669"/>
    <property type="project" value="UniProtKB-EC"/>
</dbReference>
<dbReference type="GO" id="GO:0051287">
    <property type="term" value="F:NAD binding"/>
    <property type="evidence" value="ECO:0007669"/>
    <property type="project" value="UniProtKB-UniRule"/>
</dbReference>
<dbReference type="GO" id="GO:0050661">
    <property type="term" value="F:NADP binding"/>
    <property type="evidence" value="ECO:0007669"/>
    <property type="project" value="UniProtKB-UniRule"/>
</dbReference>
<dbReference type="GO" id="GO:0016726">
    <property type="term" value="F:oxidoreductase activity, acting on CH or CH2 groups, NAD or NADP as acceptor"/>
    <property type="evidence" value="ECO:0007669"/>
    <property type="project" value="UniProtKB-UniRule"/>
</dbReference>
<dbReference type="GO" id="GO:0019877">
    <property type="term" value="P:diaminopimelate biosynthetic process"/>
    <property type="evidence" value="ECO:0007669"/>
    <property type="project" value="UniProtKB-UniRule"/>
</dbReference>
<dbReference type="GO" id="GO:0009089">
    <property type="term" value="P:lysine biosynthetic process via diaminopimelate"/>
    <property type="evidence" value="ECO:0007669"/>
    <property type="project" value="UniProtKB-UniRule"/>
</dbReference>
<dbReference type="CDD" id="cd02274">
    <property type="entry name" value="DHDPR_N"/>
    <property type="match status" value="1"/>
</dbReference>
<dbReference type="FunFam" id="3.30.360.10:FF:000009">
    <property type="entry name" value="4-hydroxy-tetrahydrodipicolinate reductase"/>
    <property type="match status" value="1"/>
</dbReference>
<dbReference type="FunFam" id="3.40.50.720:FF:000180">
    <property type="entry name" value="4-hydroxy-tetrahydrodipicolinate reductase"/>
    <property type="match status" value="1"/>
</dbReference>
<dbReference type="Gene3D" id="3.30.360.10">
    <property type="entry name" value="Dihydrodipicolinate Reductase, domain 2"/>
    <property type="match status" value="1"/>
</dbReference>
<dbReference type="Gene3D" id="3.40.50.720">
    <property type="entry name" value="NAD(P)-binding Rossmann-like Domain"/>
    <property type="match status" value="1"/>
</dbReference>
<dbReference type="HAMAP" id="MF_00102">
    <property type="entry name" value="DapB"/>
    <property type="match status" value="1"/>
</dbReference>
<dbReference type="InterPro" id="IPR022663">
    <property type="entry name" value="DapB_C"/>
</dbReference>
<dbReference type="InterPro" id="IPR000846">
    <property type="entry name" value="DapB_N"/>
</dbReference>
<dbReference type="InterPro" id="IPR022664">
    <property type="entry name" value="DapB_N_CS"/>
</dbReference>
<dbReference type="InterPro" id="IPR023940">
    <property type="entry name" value="DHDPR_bac"/>
</dbReference>
<dbReference type="InterPro" id="IPR036291">
    <property type="entry name" value="NAD(P)-bd_dom_sf"/>
</dbReference>
<dbReference type="NCBIfam" id="TIGR00036">
    <property type="entry name" value="dapB"/>
    <property type="match status" value="1"/>
</dbReference>
<dbReference type="PANTHER" id="PTHR20836:SF0">
    <property type="entry name" value="4-HYDROXY-TETRAHYDRODIPICOLINATE REDUCTASE 1, CHLOROPLASTIC-RELATED"/>
    <property type="match status" value="1"/>
</dbReference>
<dbReference type="PANTHER" id="PTHR20836">
    <property type="entry name" value="DIHYDRODIPICOLINATE REDUCTASE"/>
    <property type="match status" value="1"/>
</dbReference>
<dbReference type="Pfam" id="PF05173">
    <property type="entry name" value="DapB_C"/>
    <property type="match status" value="1"/>
</dbReference>
<dbReference type="Pfam" id="PF01113">
    <property type="entry name" value="DapB_N"/>
    <property type="match status" value="1"/>
</dbReference>
<dbReference type="PIRSF" id="PIRSF000161">
    <property type="entry name" value="DHPR"/>
    <property type="match status" value="1"/>
</dbReference>
<dbReference type="SUPFAM" id="SSF55347">
    <property type="entry name" value="Glyceraldehyde-3-phosphate dehydrogenase-like, C-terminal domain"/>
    <property type="match status" value="1"/>
</dbReference>
<dbReference type="SUPFAM" id="SSF51735">
    <property type="entry name" value="NAD(P)-binding Rossmann-fold domains"/>
    <property type="match status" value="1"/>
</dbReference>
<dbReference type="PROSITE" id="PS01298">
    <property type="entry name" value="DAPB"/>
    <property type="match status" value="1"/>
</dbReference>